<organism>
    <name type="scientific">Vibrio cholerae serotype O1 (strain ATCC 39315 / El Tor Inaba N16961)</name>
    <dbReference type="NCBI Taxonomy" id="243277"/>
    <lineage>
        <taxon>Bacteria</taxon>
        <taxon>Pseudomonadati</taxon>
        <taxon>Pseudomonadota</taxon>
        <taxon>Gammaproteobacteria</taxon>
        <taxon>Vibrionales</taxon>
        <taxon>Vibrionaceae</taxon>
        <taxon>Vibrio</taxon>
    </lineage>
</organism>
<reference key="1">
    <citation type="journal article" date="2000" name="Nature">
        <title>DNA sequence of both chromosomes of the cholera pathogen Vibrio cholerae.</title>
        <authorList>
            <person name="Heidelberg J.F."/>
            <person name="Eisen J.A."/>
            <person name="Nelson W.C."/>
            <person name="Clayton R.A."/>
            <person name="Gwinn M.L."/>
            <person name="Dodson R.J."/>
            <person name="Haft D.H."/>
            <person name="Hickey E.K."/>
            <person name="Peterson J.D."/>
            <person name="Umayam L.A."/>
            <person name="Gill S.R."/>
            <person name="Nelson K.E."/>
            <person name="Read T.D."/>
            <person name="Tettelin H."/>
            <person name="Richardson D.L."/>
            <person name="Ermolaeva M.D."/>
            <person name="Vamathevan J.J."/>
            <person name="Bass S."/>
            <person name="Qin H."/>
            <person name="Dragoi I."/>
            <person name="Sellers P."/>
            <person name="McDonald L.A."/>
            <person name="Utterback T.R."/>
            <person name="Fleischmann R.D."/>
            <person name="Nierman W.C."/>
            <person name="White O."/>
            <person name="Salzberg S.L."/>
            <person name="Smith H.O."/>
            <person name="Colwell R.R."/>
            <person name="Mekalanos J.J."/>
            <person name="Venter J.C."/>
            <person name="Fraser C.M."/>
        </authorList>
    </citation>
    <scope>NUCLEOTIDE SEQUENCE [LARGE SCALE GENOMIC DNA]</scope>
    <source>
        <strain>ATCC 39315 / El Tor Inaba N16961</strain>
    </source>
</reference>
<reference key="2">
    <citation type="journal article" date="2021" name="Science">
        <title>A third purine biosynthetic pathway encoded by aminoadenine-based viral DNA genomes.</title>
        <authorList>
            <person name="Sleiman D."/>
            <person name="Garcia P.S."/>
            <person name="Lagune M."/>
            <person name="Loc'h J."/>
            <person name="Haouz A."/>
            <person name="Taib N."/>
            <person name="Roethlisberger P."/>
            <person name="Gribaldo S."/>
            <person name="Marliere P."/>
            <person name="Kaminski P.A."/>
        </authorList>
    </citation>
    <scope>FUNCTION (MICROBIAL INFECTION)</scope>
    <scope>CATALYTIC ACTIVITY (MICROBIAL INFECTION)</scope>
</reference>
<accession>Q9KTX4</accession>
<comment type="function">
    <text evidence="1">Major role in the synthesis of nucleoside triphosphates other than ATP. The ATP gamma phosphate is transferred to the NDP beta phosphate via a ping-pong mechanism, using a phosphorylated active-site intermediate.</text>
</comment>
<comment type="function">
    <text evidence="2">(Microbial infection) Catalyzes the phosphorylation of dZDP to dZTP, when the bacterium is infected by a phage that produces the substrate for the synthesis of dZTP (2- amino-2'-deoxyadenosine 5'-triphosphate), which is then used by the phage as a DNA polymerase substrate.</text>
</comment>
<comment type="catalytic activity">
    <reaction evidence="2">
        <text>dZDP + ATP = dZTP + ADP</text>
        <dbReference type="Rhea" id="RHEA:67644"/>
        <dbReference type="ChEBI" id="CHEBI:30616"/>
        <dbReference type="ChEBI" id="CHEBI:172929"/>
        <dbReference type="ChEBI" id="CHEBI:172931"/>
        <dbReference type="ChEBI" id="CHEBI:456216"/>
    </reaction>
</comment>
<comment type="catalytic activity">
    <reaction evidence="1">
        <text>a 2'-deoxyribonucleoside 5'-diphosphate + ATP = a 2'-deoxyribonucleoside 5'-triphosphate + ADP</text>
        <dbReference type="Rhea" id="RHEA:44640"/>
        <dbReference type="ChEBI" id="CHEBI:30616"/>
        <dbReference type="ChEBI" id="CHEBI:61560"/>
        <dbReference type="ChEBI" id="CHEBI:73316"/>
        <dbReference type="ChEBI" id="CHEBI:456216"/>
        <dbReference type="EC" id="2.7.4.6"/>
    </reaction>
</comment>
<comment type="catalytic activity">
    <reaction evidence="1">
        <text>a ribonucleoside 5'-diphosphate + ATP = a ribonucleoside 5'-triphosphate + ADP</text>
        <dbReference type="Rhea" id="RHEA:18113"/>
        <dbReference type="ChEBI" id="CHEBI:30616"/>
        <dbReference type="ChEBI" id="CHEBI:57930"/>
        <dbReference type="ChEBI" id="CHEBI:61557"/>
        <dbReference type="ChEBI" id="CHEBI:456216"/>
        <dbReference type="EC" id="2.7.4.6"/>
    </reaction>
</comment>
<comment type="cofactor">
    <cofactor evidence="1">
        <name>Mg(2+)</name>
        <dbReference type="ChEBI" id="CHEBI:18420"/>
    </cofactor>
</comment>
<comment type="pathway">
    <text evidence="2">Purine metabolism.</text>
</comment>
<comment type="subunit">
    <text evidence="1">Homotetramer.</text>
</comment>
<comment type="subcellular location">
    <subcellularLocation>
        <location evidence="1">Cytoplasm</location>
    </subcellularLocation>
</comment>
<comment type="similarity">
    <text evidence="1">Belongs to the NDK family.</text>
</comment>
<evidence type="ECO:0000255" key="1">
    <source>
        <dbReference type="HAMAP-Rule" id="MF_00451"/>
    </source>
</evidence>
<evidence type="ECO:0000269" key="2">
    <source>
    </source>
</evidence>
<proteinExistence type="evidence at protein level"/>
<feature type="chain" id="PRO_0000137070" description="Nucleoside diphosphate kinase">
    <location>
        <begin position="1"/>
        <end position="142"/>
    </location>
</feature>
<feature type="active site" description="Pros-phosphohistidine intermediate" evidence="1">
    <location>
        <position position="117"/>
    </location>
</feature>
<feature type="binding site" evidence="1">
    <location>
        <position position="11"/>
    </location>
    <ligand>
        <name>ATP</name>
        <dbReference type="ChEBI" id="CHEBI:30616"/>
    </ligand>
</feature>
<feature type="binding site" evidence="1">
    <location>
        <position position="59"/>
    </location>
    <ligand>
        <name>ATP</name>
        <dbReference type="ChEBI" id="CHEBI:30616"/>
    </ligand>
</feature>
<feature type="binding site" evidence="1">
    <location>
        <position position="87"/>
    </location>
    <ligand>
        <name>ATP</name>
        <dbReference type="ChEBI" id="CHEBI:30616"/>
    </ligand>
</feature>
<feature type="binding site" evidence="1">
    <location>
        <position position="93"/>
    </location>
    <ligand>
        <name>ATP</name>
        <dbReference type="ChEBI" id="CHEBI:30616"/>
    </ligand>
</feature>
<feature type="binding site" evidence="1">
    <location>
        <position position="104"/>
    </location>
    <ligand>
        <name>ATP</name>
        <dbReference type="ChEBI" id="CHEBI:30616"/>
    </ligand>
</feature>
<feature type="binding site" evidence="1">
    <location>
        <position position="114"/>
    </location>
    <ligand>
        <name>ATP</name>
        <dbReference type="ChEBI" id="CHEBI:30616"/>
    </ligand>
</feature>
<dbReference type="EC" id="2.7.4.6" evidence="1"/>
<dbReference type="EMBL" id="AE003852">
    <property type="protein sequence ID" value="AAF93921.1"/>
    <property type="molecule type" value="Genomic_DNA"/>
</dbReference>
<dbReference type="PIR" id="C82283">
    <property type="entry name" value="C82283"/>
</dbReference>
<dbReference type="RefSeq" id="NP_230405.1">
    <property type="nucleotide sequence ID" value="NC_002505.1"/>
</dbReference>
<dbReference type="RefSeq" id="WP_001162850.1">
    <property type="nucleotide sequence ID" value="NZ_LT906614.1"/>
</dbReference>
<dbReference type="SMR" id="Q9KTX4"/>
<dbReference type="STRING" id="243277.VC_0756"/>
<dbReference type="DNASU" id="2615299"/>
<dbReference type="EnsemblBacteria" id="AAF93921">
    <property type="protein sequence ID" value="AAF93921"/>
    <property type="gene ID" value="VC_0756"/>
</dbReference>
<dbReference type="GeneID" id="94014474"/>
<dbReference type="KEGG" id="vch:VC_0756"/>
<dbReference type="PATRIC" id="fig|243277.26.peg.720"/>
<dbReference type="eggNOG" id="COG0105">
    <property type="taxonomic scope" value="Bacteria"/>
</dbReference>
<dbReference type="HOGENOM" id="CLU_060216_8_1_6"/>
<dbReference type="Proteomes" id="UP000000584">
    <property type="component" value="Chromosome 1"/>
</dbReference>
<dbReference type="GO" id="GO:0005737">
    <property type="term" value="C:cytoplasm"/>
    <property type="evidence" value="ECO:0007669"/>
    <property type="project" value="UniProtKB-SubCell"/>
</dbReference>
<dbReference type="GO" id="GO:0005524">
    <property type="term" value="F:ATP binding"/>
    <property type="evidence" value="ECO:0007669"/>
    <property type="project" value="UniProtKB-UniRule"/>
</dbReference>
<dbReference type="GO" id="GO:0046872">
    <property type="term" value="F:metal ion binding"/>
    <property type="evidence" value="ECO:0007669"/>
    <property type="project" value="UniProtKB-KW"/>
</dbReference>
<dbReference type="GO" id="GO:0004550">
    <property type="term" value="F:nucleoside diphosphate kinase activity"/>
    <property type="evidence" value="ECO:0007669"/>
    <property type="project" value="UniProtKB-UniRule"/>
</dbReference>
<dbReference type="GO" id="GO:0006241">
    <property type="term" value="P:CTP biosynthetic process"/>
    <property type="evidence" value="ECO:0007669"/>
    <property type="project" value="UniProtKB-UniRule"/>
</dbReference>
<dbReference type="GO" id="GO:0006183">
    <property type="term" value="P:GTP biosynthetic process"/>
    <property type="evidence" value="ECO:0007669"/>
    <property type="project" value="UniProtKB-UniRule"/>
</dbReference>
<dbReference type="GO" id="GO:0006163">
    <property type="term" value="P:purine nucleotide metabolic process"/>
    <property type="evidence" value="ECO:0000318"/>
    <property type="project" value="GO_Central"/>
</dbReference>
<dbReference type="GO" id="GO:0006220">
    <property type="term" value="P:pyrimidine nucleotide metabolic process"/>
    <property type="evidence" value="ECO:0000318"/>
    <property type="project" value="GO_Central"/>
</dbReference>
<dbReference type="GO" id="GO:0006228">
    <property type="term" value="P:UTP biosynthetic process"/>
    <property type="evidence" value="ECO:0007669"/>
    <property type="project" value="UniProtKB-UniRule"/>
</dbReference>
<dbReference type="CDD" id="cd04413">
    <property type="entry name" value="NDPk_I"/>
    <property type="match status" value="1"/>
</dbReference>
<dbReference type="FunFam" id="3.30.70.141:FF:000001">
    <property type="entry name" value="Nucleoside diphosphate kinase"/>
    <property type="match status" value="1"/>
</dbReference>
<dbReference type="Gene3D" id="3.30.70.141">
    <property type="entry name" value="Nucleoside diphosphate kinase-like domain"/>
    <property type="match status" value="1"/>
</dbReference>
<dbReference type="HAMAP" id="MF_00451">
    <property type="entry name" value="NDP_kinase"/>
    <property type="match status" value="1"/>
</dbReference>
<dbReference type="InterPro" id="IPR034907">
    <property type="entry name" value="NDK-like_dom"/>
</dbReference>
<dbReference type="InterPro" id="IPR036850">
    <property type="entry name" value="NDK-like_dom_sf"/>
</dbReference>
<dbReference type="InterPro" id="IPR001564">
    <property type="entry name" value="Nucleoside_diP_kinase"/>
</dbReference>
<dbReference type="InterPro" id="IPR023005">
    <property type="entry name" value="Nucleoside_diP_kinase_AS"/>
</dbReference>
<dbReference type="NCBIfam" id="NF001908">
    <property type="entry name" value="PRK00668.1"/>
    <property type="match status" value="1"/>
</dbReference>
<dbReference type="PANTHER" id="PTHR46161">
    <property type="entry name" value="NUCLEOSIDE DIPHOSPHATE KINASE"/>
    <property type="match status" value="1"/>
</dbReference>
<dbReference type="PANTHER" id="PTHR46161:SF3">
    <property type="entry name" value="NUCLEOSIDE DIPHOSPHATE KINASE DDB_G0292928-RELATED"/>
    <property type="match status" value="1"/>
</dbReference>
<dbReference type="Pfam" id="PF00334">
    <property type="entry name" value="NDK"/>
    <property type="match status" value="1"/>
</dbReference>
<dbReference type="PRINTS" id="PR01243">
    <property type="entry name" value="NUCDPKINASE"/>
</dbReference>
<dbReference type="SMART" id="SM00562">
    <property type="entry name" value="NDK"/>
    <property type="match status" value="1"/>
</dbReference>
<dbReference type="SUPFAM" id="SSF54919">
    <property type="entry name" value="Nucleoside diphosphate kinase, NDK"/>
    <property type="match status" value="1"/>
</dbReference>
<dbReference type="PROSITE" id="PS00469">
    <property type="entry name" value="NDPK"/>
    <property type="match status" value="1"/>
</dbReference>
<dbReference type="PROSITE" id="PS51374">
    <property type="entry name" value="NDPK_LIKE"/>
    <property type="match status" value="1"/>
</dbReference>
<keyword id="KW-0067">ATP-binding</keyword>
<keyword id="KW-0963">Cytoplasm</keyword>
<keyword id="KW-0418">Kinase</keyword>
<keyword id="KW-0460">Magnesium</keyword>
<keyword id="KW-0479">Metal-binding</keyword>
<keyword id="KW-0546">Nucleotide metabolism</keyword>
<keyword id="KW-0547">Nucleotide-binding</keyword>
<keyword id="KW-0597">Phosphoprotein</keyword>
<keyword id="KW-1185">Reference proteome</keyword>
<keyword id="KW-0808">Transferase</keyword>
<name>NDK_VIBCH</name>
<sequence>MALERTFSIIKPDAVKRNLIGEIYHRIEKAGLQIIAAKMVHLSEEQASGFYAEHEGKPFFEPLKEFMTSGPIMVQVLEGENAIARYRELMGKTNPEEAACGTLRADYALSMRYNSVHGSDSPASAAREIEFFFPESEICPRP</sequence>
<protein>
    <recommendedName>
        <fullName evidence="1">Nucleoside diphosphate kinase</fullName>
        <shortName evidence="1">NDK</shortName>
        <shortName evidence="1">NDP kinase</shortName>
        <ecNumber evidence="1">2.7.4.6</ecNumber>
    </recommendedName>
    <alternativeName>
        <fullName evidence="1">Nucleoside-2-P kinase</fullName>
    </alternativeName>
</protein>
<gene>
    <name evidence="1" type="primary">ndk</name>
    <name type="ordered locus">VC_0756</name>
</gene>